<comment type="function">
    <text evidence="1">Cytokine that can act as a growth factor for activated T and NK cells, enhance the lytic activity of NK/lymphokine-activated killer cells, and stimulate the production of IFN-gamma by resting PBMC.</text>
</comment>
<comment type="function">
    <text evidence="1">Associates with IL23A to form the IL-23 interleukin, a heterodimeric cytokine which functions in innate and adaptive immunity. IL-23 may constitute with IL-17 an acute response to infection in peripheral tissues. IL-23 binds to a heterodimeric receptor complex composed of IL12RB1 and IL23R, activates the Jak-Stat signaling cascade, stimulates memory rather than naive T-cells and promotes production of pro-inflammatory cytokines. IL-23 induces autoimmune inflammation and thus may be responsible for autoimmune inflammatory diseases and may be important for tumorigenesis (By similarity).</text>
</comment>
<comment type="subunit">
    <text evidence="2 3">Heterodimer with IL12A; disulfide-linked. The heterodimer is known as interleukin IL-12. Heterodimer with IL23A; disulfide-linked. The heterodimer is known as interleukin IL-23. Also secreted as a monomer. Interacts with NBR1; this interaction promotes IL-12 secretion (By similarity).</text>
</comment>
<comment type="subcellular location">
    <subcellularLocation>
        <location>Secreted</location>
    </subcellularLocation>
</comment>
<comment type="similarity">
    <text evidence="7">Belongs to the IL-12B family.</text>
</comment>
<evidence type="ECO:0000250" key="1"/>
<evidence type="ECO:0000250" key="2">
    <source>
        <dbReference type="UniProtKB" id="P29460"/>
    </source>
</evidence>
<evidence type="ECO:0000250" key="3">
    <source>
        <dbReference type="UniProtKB" id="P43432"/>
    </source>
</evidence>
<evidence type="ECO:0000255" key="4"/>
<evidence type="ECO:0000255" key="5">
    <source>
        <dbReference type="PROSITE-ProRule" id="PRU00114"/>
    </source>
</evidence>
<evidence type="ECO:0000255" key="6">
    <source>
        <dbReference type="PROSITE-ProRule" id="PRU00316"/>
    </source>
</evidence>
<evidence type="ECO:0000305" key="7"/>
<protein>
    <recommendedName>
        <fullName>Interleukin-12 subunit beta</fullName>
        <shortName>IL-12B</shortName>
    </recommendedName>
    <alternativeName>
        <fullName>Cytotoxic lymphocyte maturation factor 40 kDa subunit</fullName>
        <shortName>CLMF p40</shortName>
    </alternativeName>
    <alternativeName>
        <fullName>IL-12 subunit p40</fullName>
    </alternativeName>
</protein>
<dbReference type="EMBL" id="U11815">
    <property type="protein sequence ID" value="AAA85792.1"/>
    <property type="molecule type" value="mRNA"/>
</dbReference>
<dbReference type="EMBL" id="EU276076">
    <property type="protein sequence ID" value="ABX72074.1"/>
    <property type="molecule type" value="mRNA"/>
</dbReference>
<dbReference type="RefSeq" id="NP_776781.1">
    <property type="nucleotide sequence ID" value="NM_174356.1"/>
</dbReference>
<dbReference type="RefSeq" id="XP_005209736.1">
    <property type="nucleotide sequence ID" value="XM_005209679.3"/>
</dbReference>
<dbReference type="RefSeq" id="XP_010805864.1">
    <property type="nucleotide sequence ID" value="XM_010807562.2"/>
</dbReference>
<dbReference type="SMR" id="P46282"/>
<dbReference type="FunCoup" id="P46282">
    <property type="interactions" value="424"/>
</dbReference>
<dbReference type="STRING" id="9913.ENSBTAP00000060277"/>
<dbReference type="GlyCosmos" id="P46282">
    <property type="glycosylation" value="1 site, No reported glycans"/>
</dbReference>
<dbReference type="GlyGen" id="P46282">
    <property type="glycosylation" value="1 site"/>
</dbReference>
<dbReference type="PaxDb" id="9913-ENSBTAP00000006222"/>
<dbReference type="GeneID" id="281857"/>
<dbReference type="KEGG" id="bta:281857"/>
<dbReference type="CTD" id="3593"/>
<dbReference type="eggNOG" id="ENOG502RZMA">
    <property type="taxonomic scope" value="Eukaryota"/>
</dbReference>
<dbReference type="HOGENOM" id="CLU_071206_1_0_1"/>
<dbReference type="InParanoid" id="P46282"/>
<dbReference type="OrthoDB" id="8670716at2759"/>
<dbReference type="TreeFam" id="TF334829"/>
<dbReference type="Proteomes" id="UP000009136">
    <property type="component" value="Unplaced"/>
</dbReference>
<dbReference type="GO" id="GO:0005615">
    <property type="term" value="C:extracellular space"/>
    <property type="evidence" value="ECO:0000314"/>
    <property type="project" value="AgBase"/>
</dbReference>
<dbReference type="GO" id="GO:0043514">
    <property type="term" value="C:interleukin-12 complex"/>
    <property type="evidence" value="ECO:0000318"/>
    <property type="project" value="GO_Central"/>
</dbReference>
<dbReference type="GO" id="GO:0016020">
    <property type="term" value="C:membrane"/>
    <property type="evidence" value="ECO:0007669"/>
    <property type="project" value="InterPro"/>
</dbReference>
<dbReference type="GO" id="GO:0005125">
    <property type="term" value="F:cytokine activity"/>
    <property type="evidence" value="ECO:0007669"/>
    <property type="project" value="UniProtKB-KW"/>
</dbReference>
<dbReference type="GO" id="GO:0004896">
    <property type="term" value="F:cytokine receptor activity"/>
    <property type="evidence" value="ECO:0007669"/>
    <property type="project" value="InterPro"/>
</dbReference>
<dbReference type="GO" id="GO:0042164">
    <property type="term" value="F:interleukin-12 alpha subunit binding"/>
    <property type="evidence" value="ECO:0000318"/>
    <property type="project" value="GO_Central"/>
</dbReference>
<dbReference type="GO" id="GO:0005143">
    <property type="term" value="F:interleukin-12 receptor binding"/>
    <property type="evidence" value="ECO:0000314"/>
    <property type="project" value="UniProtKB"/>
</dbReference>
<dbReference type="GO" id="GO:0035722">
    <property type="term" value="P:interleukin-12-mediated signaling pathway"/>
    <property type="evidence" value="ECO:0000318"/>
    <property type="project" value="GO_Central"/>
</dbReference>
<dbReference type="GO" id="GO:0030101">
    <property type="term" value="P:natural killer cell activation"/>
    <property type="evidence" value="ECO:0000250"/>
    <property type="project" value="UniProtKB"/>
</dbReference>
<dbReference type="GO" id="GO:0042104">
    <property type="term" value="P:positive regulation of activated T cell proliferation"/>
    <property type="evidence" value="ECO:0000314"/>
    <property type="project" value="UniProtKB"/>
</dbReference>
<dbReference type="GO" id="GO:0032729">
    <property type="term" value="P:positive regulation of type II interferon production"/>
    <property type="evidence" value="ECO:0000314"/>
    <property type="project" value="UniProtKB"/>
</dbReference>
<dbReference type="GO" id="GO:0042093">
    <property type="term" value="P:T-helper cell differentiation"/>
    <property type="evidence" value="ECO:0000250"/>
    <property type="project" value="UniProtKB"/>
</dbReference>
<dbReference type="GO" id="GO:0032609">
    <property type="term" value="P:type II interferon production"/>
    <property type="evidence" value="ECO:0000314"/>
    <property type="project" value="AgBase"/>
</dbReference>
<dbReference type="CDD" id="cd00063">
    <property type="entry name" value="FN3"/>
    <property type="match status" value="1"/>
</dbReference>
<dbReference type="FunFam" id="2.60.40.10:FF:000959">
    <property type="entry name" value="Interleukin-12 subunit beta"/>
    <property type="match status" value="1"/>
</dbReference>
<dbReference type="FunFam" id="2.60.40.10:FF:001008">
    <property type="entry name" value="Interleukin-12 subunit beta"/>
    <property type="match status" value="1"/>
</dbReference>
<dbReference type="FunFam" id="2.60.40.10:FF:001009">
    <property type="entry name" value="Interleukin-12 subunit beta"/>
    <property type="match status" value="1"/>
</dbReference>
<dbReference type="Gene3D" id="2.60.40.10">
    <property type="entry name" value="Immunoglobulins"/>
    <property type="match status" value="3"/>
</dbReference>
<dbReference type="InterPro" id="IPR003961">
    <property type="entry name" value="FN3_dom"/>
</dbReference>
<dbReference type="InterPro" id="IPR036116">
    <property type="entry name" value="FN3_sf"/>
</dbReference>
<dbReference type="InterPro" id="IPR003530">
    <property type="entry name" value="Hematopoietin_rcpt_L_F3_CS"/>
</dbReference>
<dbReference type="InterPro" id="IPR007110">
    <property type="entry name" value="Ig-like_dom"/>
</dbReference>
<dbReference type="InterPro" id="IPR036179">
    <property type="entry name" value="Ig-like_dom_sf"/>
</dbReference>
<dbReference type="InterPro" id="IPR013783">
    <property type="entry name" value="Ig-like_fold"/>
</dbReference>
<dbReference type="InterPro" id="IPR003598">
    <property type="entry name" value="Ig_sub2"/>
</dbReference>
<dbReference type="InterPro" id="IPR050676">
    <property type="entry name" value="IL-12"/>
</dbReference>
<dbReference type="InterPro" id="IPR015528">
    <property type="entry name" value="IL-12_beta"/>
</dbReference>
<dbReference type="InterPro" id="IPR019482">
    <property type="entry name" value="IL-12_beta_cen-dom"/>
</dbReference>
<dbReference type="PANTHER" id="PTHR48485:SF4">
    <property type="entry name" value="INTERLEUKIN-12 SUBUNIT BETA"/>
    <property type="match status" value="1"/>
</dbReference>
<dbReference type="PANTHER" id="PTHR48485">
    <property type="entry name" value="INTERLEUKIN-12 SUBUNIT BETA-RELATED"/>
    <property type="match status" value="1"/>
</dbReference>
<dbReference type="Pfam" id="PF10420">
    <property type="entry name" value="IL12p40_C"/>
    <property type="match status" value="1"/>
</dbReference>
<dbReference type="PIRSF" id="PIRSF038007">
    <property type="entry name" value="IL_12_beta"/>
    <property type="match status" value="1"/>
</dbReference>
<dbReference type="PRINTS" id="PR01928">
    <property type="entry name" value="INTRLEUKN12B"/>
</dbReference>
<dbReference type="SMART" id="SM00408">
    <property type="entry name" value="IGc2"/>
    <property type="match status" value="1"/>
</dbReference>
<dbReference type="SUPFAM" id="SSF49265">
    <property type="entry name" value="Fibronectin type III"/>
    <property type="match status" value="2"/>
</dbReference>
<dbReference type="SUPFAM" id="SSF48726">
    <property type="entry name" value="Immunoglobulin"/>
    <property type="match status" value="1"/>
</dbReference>
<dbReference type="PROSITE" id="PS50853">
    <property type="entry name" value="FN3"/>
    <property type="match status" value="1"/>
</dbReference>
<dbReference type="PROSITE" id="PS01354">
    <property type="entry name" value="HEMATOPO_REC_L_F3"/>
    <property type="match status" value="1"/>
</dbReference>
<dbReference type="PROSITE" id="PS50835">
    <property type="entry name" value="IG_LIKE"/>
    <property type="match status" value="1"/>
</dbReference>
<organism>
    <name type="scientific">Bos taurus</name>
    <name type="common">Bovine</name>
    <dbReference type="NCBI Taxonomy" id="9913"/>
    <lineage>
        <taxon>Eukaryota</taxon>
        <taxon>Metazoa</taxon>
        <taxon>Chordata</taxon>
        <taxon>Craniata</taxon>
        <taxon>Vertebrata</taxon>
        <taxon>Euteleostomi</taxon>
        <taxon>Mammalia</taxon>
        <taxon>Eutheria</taxon>
        <taxon>Laurasiatheria</taxon>
        <taxon>Artiodactyla</taxon>
        <taxon>Ruminantia</taxon>
        <taxon>Pecora</taxon>
        <taxon>Bovidae</taxon>
        <taxon>Bovinae</taxon>
        <taxon>Bos</taxon>
    </lineage>
</organism>
<accession>P46282</accession>
<accession>A9QWR4</accession>
<sequence length="327" mass="37050">MHPQQLVVSWFSLVLLASPIVAMWELEKNVYVVELDWYPDAPGETVVLTCDTPEEDGITWTSDQSSEVLGSGKTLTIQVKEFGDAGQYTCHKGGEALSRSLLLLHKKEDGIWSTDILKDQKEPKAKSFLKCEAKDYSGHFTCWWLTAISTDLKFSVKSSRGSSDPRGVTCGAALLSAEKVSLEHREYNKYTVECQEGSACPAAEESLLIEVVVEAVHKLKYENYTSSFFIRDIIKPDPPKNLQLRPLKNSRQVEVSWEYPDTWSTPHSYFSLTFCVQVQGKNKREKKLFMDQTSAKVTCHKDANVRVQARDRYYSSFWSEWASVSCS</sequence>
<feature type="signal peptide" evidence="1">
    <location>
        <begin position="1"/>
        <end position="22"/>
    </location>
</feature>
<feature type="chain" id="PRO_0000010923" description="Interleukin-12 subunit beta">
    <location>
        <begin position="23"/>
        <end position="327"/>
    </location>
</feature>
<feature type="domain" description="Ig-like C2-type">
    <location>
        <begin position="23"/>
        <end position="106"/>
    </location>
</feature>
<feature type="domain" description="Fibronectin type-III" evidence="6">
    <location>
        <begin position="238"/>
        <end position="327"/>
    </location>
</feature>
<feature type="glycosylation site" description="N-linked (GlcNAc...) asparagine" evidence="4">
    <location>
        <position position="223"/>
    </location>
</feature>
<feature type="disulfide bond" evidence="5">
    <location>
        <begin position="50"/>
        <end position="90"/>
    </location>
</feature>
<feature type="disulfide bond" description="Interchain (with C-98 in IL12A and C-76 in IL23A)" evidence="2 5">
    <location>
        <position position="200"/>
    </location>
</feature>
<gene>
    <name type="primary">IL12B</name>
</gene>
<reference key="1">
    <citation type="journal article" date="1995" name="Biochim. Biophys. Acta">
        <title>Enzymatic amplification and molecular cloning of cDNA encoding the small and large subunits of bovine interleukin 12.</title>
        <authorList>
            <person name="Zarlenga D.S."/>
            <person name="Canals A."/>
            <person name="Aschenbrenner R.A."/>
            <person name="Gasbarre L.C."/>
        </authorList>
    </citation>
    <scope>NUCLEOTIDE SEQUENCE [MRNA]</scope>
    <source>
        <strain>Holstein</strain>
        <tissue>Lymphoid tissue</tissue>
    </source>
</reference>
<reference key="2">
    <citation type="submission" date="2007-11" db="EMBL/GenBank/DDBJ databases">
        <title>U.S. veterinary immune reagent network: expressed bovine gene sequences.</title>
        <authorList>
            <consortium name="U.S. Veterinary Immune Reagent Network"/>
            <person name="Hudgens T."/>
            <person name="Tompkins D."/>
            <person name="Baldwin C.L."/>
        </authorList>
    </citation>
    <scope>NUCLEOTIDE SEQUENCE [LARGE SCALE MRNA]</scope>
    <source>
        <strain>Belted Galloway</strain>
        <tissue>Peripheral blood</tissue>
    </source>
</reference>
<proteinExistence type="evidence at transcript level"/>
<name>IL12B_BOVIN</name>
<keyword id="KW-0202">Cytokine</keyword>
<keyword id="KW-1015">Disulfide bond</keyword>
<keyword id="KW-0325">Glycoprotein</keyword>
<keyword id="KW-0393">Immunoglobulin domain</keyword>
<keyword id="KW-1185">Reference proteome</keyword>
<keyword id="KW-0964">Secreted</keyword>
<keyword id="KW-0732">Signal</keyword>